<feature type="chain" id="PRO_1000045295" description="Probable transcriptional regulatory protein Cpha266_0538">
    <location>
        <begin position="1"/>
        <end position="250"/>
    </location>
</feature>
<name>Y538_CHLPD</name>
<dbReference type="EMBL" id="CP000492">
    <property type="protein sequence ID" value="ABL64595.1"/>
    <property type="molecule type" value="Genomic_DNA"/>
</dbReference>
<dbReference type="RefSeq" id="WP_011744428.1">
    <property type="nucleotide sequence ID" value="NC_008639.1"/>
</dbReference>
<dbReference type="SMR" id="A1BDW8"/>
<dbReference type="STRING" id="290317.Cpha266_0538"/>
<dbReference type="KEGG" id="cph:Cpha266_0538"/>
<dbReference type="eggNOG" id="COG0217">
    <property type="taxonomic scope" value="Bacteria"/>
</dbReference>
<dbReference type="HOGENOM" id="CLU_062974_2_2_10"/>
<dbReference type="OrthoDB" id="9781053at2"/>
<dbReference type="Proteomes" id="UP000008701">
    <property type="component" value="Chromosome"/>
</dbReference>
<dbReference type="GO" id="GO:0005829">
    <property type="term" value="C:cytosol"/>
    <property type="evidence" value="ECO:0007669"/>
    <property type="project" value="TreeGrafter"/>
</dbReference>
<dbReference type="GO" id="GO:0003677">
    <property type="term" value="F:DNA binding"/>
    <property type="evidence" value="ECO:0007669"/>
    <property type="project" value="UniProtKB-UniRule"/>
</dbReference>
<dbReference type="GO" id="GO:0006355">
    <property type="term" value="P:regulation of DNA-templated transcription"/>
    <property type="evidence" value="ECO:0007669"/>
    <property type="project" value="UniProtKB-UniRule"/>
</dbReference>
<dbReference type="FunFam" id="1.10.10.200:FF:000002">
    <property type="entry name" value="Probable transcriptional regulatory protein CLM62_37755"/>
    <property type="match status" value="1"/>
</dbReference>
<dbReference type="Gene3D" id="1.10.10.200">
    <property type="match status" value="1"/>
</dbReference>
<dbReference type="Gene3D" id="3.30.70.980">
    <property type="match status" value="2"/>
</dbReference>
<dbReference type="HAMAP" id="MF_00693">
    <property type="entry name" value="Transcrip_reg_TACO1"/>
    <property type="match status" value="1"/>
</dbReference>
<dbReference type="InterPro" id="IPR017856">
    <property type="entry name" value="Integrase-like_N"/>
</dbReference>
<dbReference type="InterPro" id="IPR048300">
    <property type="entry name" value="TACO1_YebC-like_2nd/3rd_dom"/>
</dbReference>
<dbReference type="InterPro" id="IPR049083">
    <property type="entry name" value="TACO1_YebC_N"/>
</dbReference>
<dbReference type="InterPro" id="IPR002876">
    <property type="entry name" value="Transcrip_reg_TACO1-like"/>
</dbReference>
<dbReference type="InterPro" id="IPR026564">
    <property type="entry name" value="Transcrip_reg_TACO1-like_dom3"/>
</dbReference>
<dbReference type="InterPro" id="IPR029072">
    <property type="entry name" value="YebC-like"/>
</dbReference>
<dbReference type="NCBIfam" id="NF001030">
    <property type="entry name" value="PRK00110.1"/>
    <property type="match status" value="1"/>
</dbReference>
<dbReference type="NCBIfam" id="NF009044">
    <property type="entry name" value="PRK12378.1"/>
    <property type="match status" value="1"/>
</dbReference>
<dbReference type="NCBIfam" id="TIGR01033">
    <property type="entry name" value="YebC/PmpR family DNA-binding transcriptional regulator"/>
    <property type="match status" value="1"/>
</dbReference>
<dbReference type="PANTHER" id="PTHR12532:SF6">
    <property type="entry name" value="TRANSCRIPTIONAL REGULATORY PROTEIN YEBC-RELATED"/>
    <property type="match status" value="1"/>
</dbReference>
<dbReference type="PANTHER" id="PTHR12532">
    <property type="entry name" value="TRANSLATIONAL ACTIVATOR OF CYTOCHROME C OXIDASE 1"/>
    <property type="match status" value="1"/>
</dbReference>
<dbReference type="Pfam" id="PF20772">
    <property type="entry name" value="TACO1_YebC_N"/>
    <property type="match status" value="1"/>
</dbReference>
<dbReference type="Pfam" id="PF01709">
    <property type="entry name" value="Transcrip_reg"/>
    <property type="match status" value="1"/>
</dbReference>
<dbReference type="SUPFAM" id="SSF75625">
    <property type="entry name" value="YebC-like"/>
    <property type="match status" value="1"/>
</dbReference>
<comment type="subcellular location">
    <subcellularLocation>
        <location evidence="1">Cytoplasm</location>
    </subcellularLocation>
</comment>
<comment type="similarity">
    <text evidence="1">Belongs to the TACO1 family.</text>
</comment>
<reference key="1">
    <citation type="submission" date="2006-12" db="EMBL/GenBank/DDBJ databases">
        <title>Complete sequence of Chlorobium phaeobacteroides DSM 266.</title>
        <authorList>
            <consortium name="US DOE Joint Genome Institute"/>
            <person name="Copeland A."/>
            <person name="Lucas S."/>
            <person name="Lapidus A."/>
            <person name="Barry K."/>
            <person name="Detter J.C."/>
            <person name="Glavina del Rio T."/>
            <person name="Hammon N."/>
            <person name="Israni S."/>
            <person name="Pitluck S."/>
            <person name="Goltsman E."/>
            <person name="Schmutz J."/>
            <person name="Larimer F."/>
            <person name="Land M."/>
            <person name="Hauser L."/>
            <person name="Mikhailova N."/>
            <person name="Li T."/>
            <person name="Overmann J."/>
            <person name="Bryant D.A."/>
            <person name="Richardson P."/>
        </authorList>
    </citation>
    <scope>NUCLEOTIDE SEQUENCE [LARGE SCALE GENOMIC DNA]</scope>
    <source>
        <strain>DSM 266 / SMG 266 / 2430</strain>
    </source>
</reference>
<evidence type="ECO:0000255" key="1">
    <source>
        <dbReference type="HAMAP-Rule" id="MF_00693"/>
    </source>
</evidence>
<protein>
    <recommendedName>
        <fullName evidence="1">Probable transcriptional regulatory protein Cpha266_0538</fullName>
    </recommendedName>
</protein>
<proteinExistence type="inferred from homology"/>
<sequence length="250" mass="27456">MSGHSKWATIKRKKAATDQKRGNLFTKLVKEITIAAKMGGADPGGNPRLRLAIDTARSNSMPMENILRAVKKGTGELEGVTYDEITYEGYGPAGIALIIETATDNRNRTVADIRHIMSRNNGSLGESGSVSWMFHRKGSLDVSKSAVSEDMLLEILLDAGLEDLESDDAIYYTVITDLKDLETVKKALDAAAIPFENARIDMIPENYIELEAEDASKVIRIIDALENNDDVQAVYSNMEISEKAMNSLNE</sequence>
<keyword id="KW-0963">Cytoplasm</keyword>
<keyword id="KW-0238">DNA-binding</keyword>
<keyword id="KW-1185">Reference proteome</keyword>
<keyword id="KW-0804">Transcription</keyword>
<keyword id="KW-0805">Transcription regulation</keyword>
<organism>
    <name type="scientific">Chlorobium phaeobacteroides (strain DSM 266 / SMG 266 / 2430)</name>
    <dbReference type="NCBI Taxonomy" id="290317"/>
    <lineage>
        <taxon>Bacteria</taxon>
        <taxon>Pseudomonadati</taxon>
        <taxon>Chlorobiota</taxon>
        <taxon>Chlorobiia</taxon>
        <taxon>Chlorobiales</taxon>
        <taxon>Chlorobiaceae</taxon>
        <taxon>Chlorobium/Pelodictyon group</taxon>
        <taxon>Chlorobium</taxon>
    </lineage>
</organism>
<gene>
    <name type="ordered locus">Cpha266_0538</name>
</gene>
<accession>A1BDW8</accession>